<gene>
    <name evidence="1" type="primary">dapB</name>
    <name type="ordered locus">SPJ_1463</name>
</gene>
<reference key="1">
    <citation type="journal article" date="2010" name="Genome Biol.">
        <title>Structure and dynamics of the pan-genome of Streptococcus pneumoniae and closely related species.</title>
        <authorList>
            <person name="Donati C."/>
            <person name="Hiller N.L."/>
            <person name="Tettelin H."/>
            <person name="Muzzi A."/>
            <person name="Croucher N.J."/>
            <person name="Angiuoli S.V."/>
            <person name="Oggioni M."/>
            <person name="Dunning Hotopp J.C."/>
            <person name="Hu F.Z."/>
            <person name="Riley D.R."/>
            <person name="Covacci A."/>
            <person name="Mitchell T.J."/>
            <person name="Bentley S.D."/>
            <person name="Kilian M."/>
            <person name="Ehrlich G.D."/>
            <person name="Rappuoli R."/>
            <person name="Moxon E.R."/>
            <person name="Masignani V."/>
        </authorList>
    </citation>
    <scope>NUCLEOTIDE SEQUENCE [LARGE SCALE GENOMIC DNA]</scope>
    <source>
        <strain>JJA</strain>
    </source>
</reference>
<evidence type="ECO:0000255" key="1">
    <source>
        <dbReference type="HAMAP-Rule" id="MF_00102"/>
    </source>
</evidence>
<evidence type="ECO:0000305" key="2"/>
<comment type="function">
    <text evidence="1">Catalyzes the conversion of 4-hydroxy-tetrahydrodipicolinate (HTPA) to tetrahydrodipicolinate.</text>
</comment>
<comment type="catalytic activity">
    <reaction evidence="1">
        <text>(S)-2,3,4,5-tetrahydrodipicolinate + NAD(+) + H2O = (2S,4S)-4-hydroxy-2,3,4,5-tetrahydrodipicolinate + NADH + H(+)</text>
        <dbReference type="Rhea" id="RHEA:35323"/>
        <dbReference type="ChEBI" id="CHEBI:15377"/>
        <dbReference type="ChEBI" id="CHEBI:15378"/>
        <dbReference type="ChEBI" id="CHEBI:16845"/>
        <dbReference type="ChEBI" id="CHEBI:57540"/>
        <dbReference type="ChEBI" id="CHEBI:57945"/>
        <dbReference type="ChEBI" id="CHEBI:67139"/>
        <dbReference type="EC" id="1.17.1.8"/>
    </reaction>
</comment>
<comment type="catalytic activity">
    <reaction evidence="1">
        <text>(S)-2,3,4,5-tetrahydrodipicolinate + NADP(+) + H2O = (2S,4S)-4-hydroxy-2,3,4,5-tetrahydrodipicolinate + NADPH + H(+)</text>
        <dbReference type="Rhea" id="RHEA:35331"/>
        <dbReference type="ChEBI" id="CHEBI:15377"/>
        <dbReference type="ChEBI" id="CHEBI:15378"/>
        <dbReference type="ChEBI" id="CHEBI:16845"/>
        <dbReference type="ChEBI" id="CHEBI:57783"/>
        <dbReference type="ChEBI" id="CHEBI:58349"/>
        <dbReference type="ChEBI" id="CHEBI:67139"/>
        <dbReference type="EC" id="1.17.1.8"/>
    </reaction>
</comment>
<comment type="pathway">
    <text evidence="1">Amino-acid biosynthesis; L-lysine biosynthesis via DAP pathway; (S)-tetrahydrodipicolinate from L-aspartate: step 4/4.</text>
</comment>
<comment type="subcellular location">
    <subcellularLocation>
        <location evidence="1">Cytoplasm</location>
    </subcellularLocation>
</comment>
<comment type="similarity">
    <text evidence="1">Belongs to the DapB family.</text>
</comment>
<comment type="caution">
    <text evidence="2">Was originally thought to be a dihydrodipicolinate reductase (DHDPR), catalyzing the conversion of dihydrodipicolinate to tetrahydrodipicolinate. However, it was shown in E.coli that the substrate of the enzymatic reaction is not dihydrodipicolinate (DHDP) but in fact (2S,4S)-4-hydroxy-2,3,4,5-tetrahydrodipicolinic acid (HTPA), the product released by the DapA-catalyzed reaction.</text>
</comment>
<dbReference type="EC" id="1.17.1.8" evidence="1"/>
<dbReference type="EMBL" id="CP000919">
    <property type="protein sequence ID" value="ACO19171.1"/>
    <property type="molecule type" value="Genomic_DNA"/>
</dbReference>
<dbReference type="RefSeq" id="WP_000027902.1">
    <property type="nucleotide sequence ID" value="NC_012466.1"/>
</dbReference>
<dbReference type="SMR" id="C1CFE0"/>
<dbReference type="KEGG" id="sjj:SPJ_1463"/>
<dbReference type="HOGENOM" id="CLU_047479_0_1_9"/>
<dbReference type="UniPathway" id="UPA00034">
    <property type="reaction ID" value="UER00018"/>
</dbReference>
<dbReference type="Proteomes" id="UP000002206">
    <property type="component" value="Chromosome"/>
</dbReference>
<dbReference type="GO" id="GO:0005829">
    <property type="term" value="C:cytosol"/>
    <property type="evidence" value="ECO:0007669"/>
    <property type="project" value="TreeGrafter"/>
</dbReference>
<dbReference type="GO" id="GO:0008839">
    <property type="term" value="F:4-hydroxy-tetrahydrodipicolinate reductase"/>
    <property type="evidence" value="ECO:0007669"/>
    <property type="project" value="UniProtKB-EC"/>
</dbReference>
<dbReference type="GO" id="GO:0051287">
    <property type="term" value="F:NAD binding"/>
    <property type="evidence" value="ECO:0007669"/>
    <property type="project" value="UniProtKB-UniRule"/>
</dbReference>
<dbReference type="GO" id="GO:0050661">
    <property type="term" value="F:NADP binding"/>
    <property type="evidence" value="ECO:0007669"/>
    <property type="project" value="UniProtKB-UniRule"/>
</dbReference>
<dbReference type="GO" id="GO:0016726">
    <property type="term" value="F:oxidoreductase activity, acting on CH or CH2 groups, NAD or NADP as acceptor"/>
    <property type="evidence" value="ECO:0007669"/>
    <property type="project" value="UniProtKB-UniRule"/>
</dbReference>
<dbReference type="GO" id="GO:0019877">
    <property type="term" value="P:diaminopimelate biosynthetic process"/>
    <property type="evidence" value="ECO:0007669"/>
    <property type="project" value="UniProtKB-UniRule"/>
</dbReference>
<dbReference type="GO" id="GO:0009089">
    <property type="term" value="P:lysine biosynthetic process via diaminopimelate"/>
    <property type="evidence" value="ECO:0007669"/>
    <property type="project" value="UniProtKB-UniRule"/>
</dbReference>
<dbReference type="CDD" id="cd02274">
    <property type="entry name" value="DHDPR_N"/>
    <property type="match status" value="1"/>
</dbReference>
<dbReference type="FunFam" id="3.30.360.10:FF:000009">
    <property type="entry name" value="4-hydroxy-tetrahydrodipicolinate reductase"/>
    <property type="match status" value="1"/>
</dbReference>
<dbReference type="Gene3D" id="3.30.360.10">
    <property type="entry name" value="Dihydrodipicolinate Reductase, domain 2"/>
    <property type="match status" value="1"/>
</dbReference>
<dbReference type="Gene3D" id="3.40.50.720">
    <property type="entry name" value="NAD(P)-binding Rossmann-like Domain"/>
    <property type="match status" value="1"/>
</dbReference>
<dbReference type="HAMAP" id="MF_00102">
    <property type="entry name" value="DapB"/>
    <property type="match status" value="1"/>
</dbReference>
<dbReference type="InterPro" id="IPR022663">
    <property type="entry name" value="DapB_C"/>
</dbReference>
<dbReference type="InterPro" id="IPR000846">
    <property type="entry name" value="DapB_N"/>
</dbReference>
<dbReference type="InterPro" id="IPR022664">
    <property type="entry name" value="DapB_N_CS"/>
</dbReference>
<dbReference type="InterPro" id="IPR023940">
    <property type="entry name" value="DHDPR_bac"/>
</dbReference>
<dbReference type="InterPro" id="IPR036291">
    <property type="entry name" value="NAD(P)-bd_dom_sf"/>
</dbReference>
<dbReference type="NCBIfam" id="TIGR00036">
    <property type="entry name" value="dapB"/>
    <property type="match status" value="1"/>
</dbReference>
<dbReference type="PANTHER" id="PTHR20836:SF0">
    <property type="entry name" value="4-HYDROXY-TETRAHYDRODIPICOLINATE REDUCTASE 1, CHLOROPLASTIC-RELATED"/>
    <property type="match status" value="1"/>
</dbReference>
<dbReference type="PANTHER" id="PTHR20836">
    <property type="entry name" value="DIHYDRODIPICOLINATE REDUCTASE"/>
    <property type="match status" value="1"/>
</dbReference>
<dbReference type="Pfam" id="PF05173">
    <property type="entry name" value="DapB_C"/>
    <property type="match status" value="1"/>
</dbReference>
<dbReference type="Pfam" id="PF01113">
    <property type="entry name" value="DapB_N"/>
    <property type="match status" value="1"/>
</dbReference>
<dbReference type="PIRSF" id="PIRSF000161">
    <property type="entry name" value="DHPR"/>
    <property type="match status" value="1"/>
</dbReference>
<dbReference type="SUPFAM" id="SSF55347">
    <property type="entry name" value="Glyceraldehyde-3-phosphate dehydrogenase-like, C-terminal domain"/>
    <property type="match status" value="1"/>
</dbReference>
<dbReference type="SUPFAM" id="SSF51735">
    <property type="entry name" value="NAD(P)-binding Rossmann-fold domains"/>
    <property type="match status" value="1"/>
</dbReference>
<dbReference type="PROSITE" id="PS01298">
    <property type="entry name" value="DAPB"/>
    <property type="match status" value="1"/>
</dbReference>
<accession>C1CFE0</accession>
<proteinExistence type="inferred from homology"/>
<keyword id="KW-0028">Amino-acid biosynthesis</keyword>
<keyword id="KW-0963">Cytoplasm</keyword>
<keyword id="KW-0220">Diaminopimelate biosynthesis</keyword>
<keyword id="KW-0457">Lysine biosynthesis</keyword>
<keyword id="KW-0520">NAD</keyword>
<keyword id="KW-0521">NADP</keyword>
<keyword id="KW-0560">Oxidoreductase</keyword>
<feature type="chain" id="PRO_1000189758" description="4-hydroxy-tetrahydrodipicolinate reductase">
    <location>
        <begin position="1"/>
        <end position="255"/>
    </location>
</feature>
<feature type="active site" description="Proton donor/acceptor" evidence="1">
    <location>
        <position position="145"/>
    </location>
</feature>
<feature type="active site" description="Proton donor" evidence="1">
    <location>
        <position position="149"/>
    </location>
</feature>
<feature type="binding site" evidence="1">
    <location>
        <begin position="9"/>
        <end position="14"/>
    </location>
    <ligand>
        <name>NAD(+)</name>
        <dbReference type="ChEBI" id="CHEBI:57540"/>
    </ligand>
</feature>
<feature type="binding site" evidence="1">
    <location>
        <position position="35"/>
    </location>
    <ligand>
        <name>NAD(+)</name>
        <dbReference type="ChEBI" id="CHEBI:57540"/>
    </ligand>
</feature>
<feature type="binding site" evidence="1">
    <location>
        <begin position="89"/>
        <end position="91"/>
    </location>
    <ligand>
        <name>NAD(+)</name>
        <dbReference type="ChEBI" id="CHEBI:57540"/>
    </ligand>
</feature>
<feature type="binding site" evidence="1">
    <location>
        <begin position="115"/>
        <end position="118"/>
    </location>
    <ligand>
        <name>NAD(+)</name>
        <dbReference type="ChEBI" id="CHEBI:57540"/>
    </ligand>
</feature>
<feature type="binding site" evidence="1">
    <location>
        <position position="146"/>
    </location>
    <ligand>
        <name>(S)-2,3,4,5-tetrahydrodipicolinate</name>
        <dbReference type="ChEBI" id="CHEBI:16845"/>
    </ligand>
</feature>
<feature type="binding site" evidence="1">
    <location>
        <begin position="155"/>
        <end position="156"/>
    </location>
    <ligand>
        <name>(S)-2,3,4,5-tetrahydrodipicolinate</name>
        <dbReference type="ChEBI" id="CHEBI:16845"/>
    </ligand>
</feature>
<name>DAPB_STRZJ</name>
<sequence length="255" mass="27837">MSIRVIIAGFKGKMGQAACQMVLTDPDLDLVAVLDPFESESEWQGIPVFKDKADLAGFEADVWVDFTTPAVAYENTRFALENGFAPVVGTTGFTSEEIAELKEFSRAQDLGGLIAPNFALGAVLLMQFATQAAKYFPNVEIIELHHDKKKDAPSGTAIKTAELMAEVRESIQQGAADEEELIAGARGADFDGMRIHSVRLPGLVAHQEVIFGNQGEGLTLRHDSYDRISFMTGVNLGIKEVVKRHELVYGLEHLL</sequence>
<organism>
    <name type="scientific">Streptococcus pneumoniae (strain JJA)</name>
    <dbReference type="NCBI Taxonomy" id="488222"/>
    <lineage>
        <taxon>Bacteria</taxon>
        <taxon>Bacillati</taxon>
        <taxon>Bacillota</taxon>
        <taxon>Bacilli</taxon>
        <taxon>Lactobacillales</taxon>
        <taxon>Streptococcaceae</taxon>
        <taxon>Streptococcus</taxon>
    </lineage>
</organism>
<protein>
    <recommendedName>
        <fullName evidence="1">4-hydroxy-tetrahydrodipicolinate reductase</fullName>
        <shortName evidence="1">HTPA reductase</shortName>
        <ecNumber evidence="1">1.17.1.8</ecNumber>
    </recommendedName>
</protein>